<accession>B0VXV1</accession>
<protein>
    <recommendedName>
        <fullName>Snaclec 2</fullName>
    </recommendedName>
    <alternativeName>
        <fullName>C-type lectin isoform 2</fullName>
    </alternativeName>
</protein>
<feature type="signal peptide" evidence="2">
    <location>
        <begin position="1"/>
        <end position="23"/>
    </location>
</feature>
<feature type="chain" id="PRO_0000355290" description="Snaclec 2">
    <location>
        <begin position="24"/>
        <end position="142"/>
    </location>
</feature>
<feature type="domain" description="C-type lectin" evidence="3">
    <location>
        <begin position="32"/>
        <end position="139"/>
    </location>
</feature>
<feature type="glycosylation site" description="N-linked (GlcNAc...) asparagine" evidence="2">
    <location>
        <position position="43"/>
    </location>
</feature>
<feature type="disulfide bond" evidence="3">
    <location>
        <begin position="25"/>
        <end position="36"/>
    </location>
</feature>
<feature type="disulfide bond" evidence="3">
    <location>
        <begin position="53"/>
        <end position="138"/>
    </location>
</feature>
<feature type="disulfide bond" evidence="3">
    <location>
        <begin position="115"/>
        <end position="130"/>
    </location>
</feature>
<dbReference type="EMBL" id="DQ464257">
    <property type="protein sequence ID" value="ABG26986.1"/>
    <property type="molecule type" value="mRNA"/>
</dbReference>
<dbReference type="SMR" id="B0VXV1"/>
<dbReference type="GO" id="GO:0005576">
    <property type="term" value="C:extracellular region"/>
    <property type="evidence" value="ECO:0007669"/>
    <property type="project" value="UniProtKB-SubCell"/>
</dbReference>
<dbReference type="GO" id="GO:0090729">
    <property type="term" value="F:toxin activity"/>
    <property type="evidence" value="ECO:0007669"/>
    <property type="project" value="UniProtKB-KW"/>
</dbReference>
<dbReference type="FunFam" id="3.10.100.10:FF:000087">
    <property type="entry name" value="Snaclec rhodocetin subunit delta"/>
    <property type="match status" value="1"/>
</dbReference>
<dbReference type="Gene3D" id="3.10.100.10">
    <property type="entry name" value="Mannose-Binding Protein A, subunit A"/>
    <property type="match status" value="1"/>
</dbReference>
<dbReference type="InterPro" id="IPR001304">
    <property type="entry name" value="C-type_lectin-like"/>
</dbReference>
<dbReference type="InterPro" id="IPR016186">
    <property type="entry name" value="C-type_lectin-like/link_sf"/>
</dbReference>
<dbReference type="InterPro" id="IPR050111">
    <property type="entry name" value="C-type_lectin/snaclec_domain"/>
</dbReference>
<dbReference type="InterPro" id="IPR018378">
    <property type="entry name" value="C-type_lectin_CS"/>
</dbReference>
<dbReference type="InterPro" id="IPR016187">
    <property type="entry name" value="CTDL_fold"/>
</dbReference>
<dbReference type="PANTHER" id="PTHR22803">
    <property type="entry name" value="MANNOSE, PHOSPHOLIPASE, LECTIN RECEPTOR RELATED"/>
    <property type="match status" value="1"/>
</dbReference>
<dbReference type="Pfam" id="PF00059">
    <property type="entry name" value="Lectin_C"/>
    <property type="match status" value="1"/>
</dbReference>
<dbReference type="SMART" id="SM00034">
    <property type="entry name" value="CLECT"/>
    <property type="match status" value="1"/>
</dbReference>
<dbReference type="SUPFAM" id="SSF56436">
    <property type="entry name" value="C-type lectin-like"/>
    <property type="match status" value="1"/>
</dbReference>
<dbReference type="PROSITE" id="PS00615">
    <property type="entry name" value="C_TYPE_LECTIN_1"/>
    <property type="match status" value="1"/>
</dbReference>
<dbReference type="PROSITE" id="PS50041">
    <property type="entry name" value="C_TYPE_LECTIN_2"/>
    <property type="match status" value="1"/>
</dbReference>
<keyword id="KW-1015">Disulfide bond</keyword>
<keyword id="KW-0325">Glycoprotein</keyword>
<keyword id="KW-1199">Hemostasis impairing toxin</keyword>
<keyword id="KW-0964">Secreted</keyword>
<keyword id="KW-0732">Signal</keyword>
<keyword id="KW-0800">Toxin</keyword>
<name>SL2_SISCA</name>
<sequence>MGRFIFVSFSLLVVFLSLSGTGAHCPSGWYTYEGHCYRVFQQNMTWEDAEKFCTQQYEKSHLVSFRSSEEVDFLVSLLKVDLFWMGRRDIWNERRLQWSDGTKVDYKDWRAKPECIVCRATDNHWLSTSCSETHNVICKFET</sequence>
<proteinExistence type="evidence at transcript level"/>
<organism>
    <name type="scientific">Sistrurus catenatus edwardsii</name>
    <name type="common">Desert massasauga</name>
    <name type="synonym">Crotalophorus edwardsii</name>
    <dbReference type="NCBI Taxonomy" id="8762"/>
    <lineage>
        <taxon>Eukaryota</taxon>
        <taxon>Metazoa</taxon>
        <taxon>Chordata</taxon>
        <taxon>Craniata</taxon>
        <taxon>Vertebrata</taxon>
        <taxon>Euteleostomi</taxon>
        <taxon>Lepidosauria</taxon>
        <taxon>Squamata</taxon>
        <taxon>Bifurcata</taxon>
        <taxon>Unidentata</taxon>
        <taxon>Episquamata</taxon>
        <taxon>Toxicofera</taxon>
        <taxon>Serpentes</taxon>
        <taxon>Colubroidea</taxon>
        <taxon>Viperidae</taxon>
        <taxon>Crotalinae</taxon>
        <taxon>Sistrurus</taxon>
    </lineage>
</organism>
<reference key="1">
    <citation type="journal article" date="2007" name="BMC Mol. Biol.">
        <title>The venom gland transcriptome of the Desert Massasauga rattlesnake (Sistrurus catenatus edwardsii): towards an understanding of venom composition among advanced snakes (Superfamily Colubroidea).</title>
        <authorList>
            <person name="Pahari S."/>
            <person name="Mackessy S.P."/>
            <person name="Kini R.M."/>
        </authorList>
    </citation>
    <scope>NUCLEOTIDE SEQUENCE [LARGE SCALE MRNA]</scope>
    <source>
        <tissue>Venom gland</tissue>
    </source>
</reference>
<evidence type="ECO:0000250" key="1"/>
<evidence type="ECO:0000255" key="2"/>
<evidence type="ECO:0000255" key="3">
    <source>
        <dbReference type="PROSITE-ProRule" id="PRU00040"/>
    </source>
</evidence>
<evidence type="ECO:0000305" key="4"/>
<comment type="function">
    <text evidence="1">Interferes with one step of hemostasis (modulation of platelet aggregation, or coagulation cascade, for example).</text>
</comment>
<comment type="subunit">
    <text evidence="1">Heterodimer; disulfide-linked.</text>
</comment>
<comment type="subcellular location">
    <subcellularLocation>
        <location evidence="1">Secreted</location>
    </subcellularLocation>
</comment>
<comment type="tissue specificity">
    <text>Expressed by the venom gland.</text>
</comment>
<comment type="miscellaneous">
    <text>Shows greater sequence similarity to the beta than alpha subunits compared to other heterodimer snaclecs.</text>
</comment>
<comment type="similarity">
    <text evidence="4">Belongs to the snaclec family.</text>
</comment>